<accession>B3QQA5</accession>
<keyword id="KW-0378">Hydrolase</keyword>
<keyword id="KW-0511">Multifunctional enzyme</keyword>
<keyword id="KW-0658">Purine biosynthesis</keyword>
<keyword id="KW-0808">Transferase</keyword>
<dbReference type="EC" id="2.1.2.3" evidence="1"/>
<dbReference type="EC" id="3.5.4.10" evidence="1"/>
<dbReference type="EMBL" id="CP001099">
    <property type="protein sequence ID" value="ACF12108.1"/>
    <property type="molecule type" value="Genomic_DNA"/>
</dbReference>
<dbReference type="RefSeq" id="WP_012502941.1">
    <property type="nucleotide sequence ID" value="NC_011027.1"/>
</dbReference>
<dbReference type="SMR" id="B3QQA5"/>
<dbReference type="STRING" id="517417.Cpar_1716"/>
<dbReference type="KEGG" id="cpc:Cpar_1716"/>
<dbReference type="eggNOG" id="COG0138">
    <property type="taxonomic scope" value="Bacteria"/>
</dbReference>
<dbReference type="HOGENOM" id="CLU_016316_5_2_10"/>
<dbReference type="OrthoDB" id="9802065at2"/>
<dbReference type="UniPathway" id="UPA00074">
    <property type="reaction ID" value="UER00133"/>
</dbReference>
<dbReference type="UniPathway" id="UPA00074">
    <property type="reaction ID" value="UER00135"/>
</dbReference>
<dbReference type="Proteomes" id="UP000008811">
    <property type="component" value="Chromosome"/>
</dbReference>
<dbReference type="GO" id="GO:0005829">
    <property type="term" value="C:cytosol"/>
    <property type="evidence" value="ECO:0007669"/>
    <property type="project" value="TreeGrafter"/>
</dbReference>
<dbReference type="GO" id="GO:0003937">
    <property type="term" value="F:IMP cyclohydrolase activity"/>
    <property type="evidence" value="ECO:0007669"/>
    <property type="project" value="UniProtKB-UniRule"/>
</dbReference>
<dbReference type="GO" id="GO:0004643">
    <property type="term" value="F:phosphoribosylaminoimidazolecarboxamide formyltransferase activity"/>
    <property type="evidence" value="ECO:0007669"/>
    <property type="project" value="UniProtKB-UniRule"/>
</dbReference>
<dbReference type="GO" id="GO:0006189">
    <property type="term" value="P:'de novo' IMP biosynthetic process"/>
    <property type="evidence" value="ECO:0007669"/>
    <property type="project" value="UniProtKB-UniRule"/>
</dbReference>
<dbReference type="CDD" id="cd01421">
    <property type="entry name" value="IMPCH"/>
    <property type="match status" value="1"/>
</dbReference>
<dbReference type="FunFam" id="3.40.140.20:FF:000001">
    <property type="entry name" value="Bifunctional purine biosynthesis protein PurH"/>
    <property type="match status" value="1"/>
</dbReference>
<dbReference type="FunFam" id="3.40.50.1380:FF:000001">
    <property type="entry name" value="Bifunctional purine biosynthesis protein PurH"/>
    <property type="match status" value="1"/>
</dbReference>
<dbReference type="Gene3D" id="3.40.140.20">
    <property type="match status" value="2"/>
</dbReference>
<dbReference type="Gene3D" id="3.40.50.1380">
    <property type="entry name" value="Methylglyoxal synthase-like domain"/>
    <property type="match status" value="1"/>
</dbReference>
<dbReference type="HAMAP" id="MF_00139">
    <property type="entry name" value="PurH"/>
    <property type="match status" value="1"/>
</dbReference>
<dbReference type="InterPro" id="IPR024051">
    <property type="entry name" value="AICAR_Tfase_dup_dom_sf"/>
</dbReference>
<dbReference type="InterPro" id="IPR016193">
    <property type="entry name" value="Cytidine_deaminase-like"/>
</dbReference>
<dbReference type="InterPro" id="IPR011607">
    <property type="entry name" value="MGS-like_dom"/>
</dbReference>
<dbReference type="InterPro" id="IPR036914">
    <property type="entry name" value="MGS-like_dom_sf"/>
</dbReference>
<dbReference type="InterPro" id="IPR002695">
    <property type="entry name" value="PurH-like"/>
</dbReference>
<dbReference type="NCBIfam" id="NF002049">
    <property type="entry name" value="PRK00881.1"/>
    <property type="match status" value="1"/>
</dbReference>
<dbReference type="NCBIfam" id="TIGR00355">
    <property type="entry name" value="purH"/>
    <property type="match status" value="1"/>
</dbReference>
<dbReference type="PANTHER" id="PTHR11692:SF0">
    <property type="entry name" value="BIFUNCTIONAL PURINE BIOSYNTHESIS PROTEIN ATIC"/>
    <property type="match status" value="1"/>
</dbReference>
<dbReference type="PANTHER" id="PTHR11692">
    <property type="entry name" value="BIFUNCTIONAL PURINE BIOSYNTHESIS PROTEIN PURH"/>
    <property type="match status" value="1"/>
</dbReference>
<dbReference type="Pfam" id="PF01808">
    <property type="entry name" value="AICARFT_IMPCHas"/>
    <property type="match status" value="1"/>
</dbReference>
<dbReference type="Pfam" id="PF02142">
    <property type="entry name" value="MGS"/>
    <property type="match status" value="1"/>
</dbReference>
<dbReference type="PIRSF" id="PIRSF000414">
    <property type="entry name" value="AICARFT_IMPCHas"/>
    <property type="match status" value="1"/>
</dbReference>
<dbReference type="SMART" id="SM00798">
    <property type="entry name" value="AICARFT_IMPCHas"/>
    <property type="match status" value="1"/>
</dbReference>
<dbReference type="SMART" id="SM00851">
    <property type="entry name" value="MGS"/>
    <property type="match status" value="1"/>
</dbReference>
<dbReference type="SUPFAM" id="SSF53927">
    <property type="entry name" value="Cytidine deaminase-like"/>
    <property type="match status" value="1"/>
</dbReference>
<dbReference type="SUPFAM" id="SSF52335">
    <property type="entry name" value="Methylglyoxal synthase-like"/>
    <property type="match status" value="1"/>
</dbReference>
<dbReference type="PROSITE" id="PS51855">
    <property type="entry name" value="MGS"/>
    <property type="match status" value="1"/>
</dbReference>
<name>PUR9_CHLP8</name>
<sequence>MSDPVIKRALVSVSDKTGIVDFCRELASMGVEIFSTGGTLKALQDAGIAAESISTITGFPEIMDGRVKTLHPKIHGGLLAVRDNAEHQQAARENGIEFIDLVAVNLYPFEATIAKADVSFEEAIENIDIGGPSMLRSAAKNNESVTVITDAADYATVLDEMKSNGGATTRTTRLTLAAKVYALTSRYDTAIAAYMAKAAGVEGANDTMTVKLEKELGMRYGENPHQSAGLYKMDDGNGTRSFGAIFEKLHGKELSYNNMLDIAAATGIIEEFRGEEPSVVIVKHTNPCGVAQAPTLCEAYRKAFSTDTQAPFGGIIAFNRPLDMETANAVNEIFTEILIAPAFEEGVLDLLMKKKDRRLVLQKQPLPKAGWEFKSTPFGMLVQERDSKMVAPEELKVVTKRQPTEEELADLMFAWKIARHIKSNTILYVKNRQTFGVGAGQMSRVDSSKIARWKASEVGLDLKGSVVASDAFFPFADGLLAAAEAGVTAVIQPGGSIRDNEVIEAADANNLAMVFTGMRHFKH</sequence>
<evidence type="ECO:0000255" key="1">
    <source>
        <dbReference type="HAMAP-Rule" id="MF_00139"/>
    </source>
</evidence>
<evidence type="ECO:0000255" key="2">
    <source>
        <dbReference type="PROSITE-ProRule" id="PRU01202"/>
    </source>
</evidence>
<comment type="catalytic activity">
    <reaction evidence="1">
        <text>(6R)-10-formyltetrahydrofolate + 5-amino-1-(5-phospho-beta-D-ribosyl)imidazole-4-carboxamide = 5-formamido-1-(5-phospho-D-ribosyl)imidazole-4-carboxamide + (6S)-5,6,7,8-tetrahydrofolate</text>
        <dbReference type="Rhea" id="RHEA:22192"/>
        <dbReference type="ChEBI" id="CHEBI:57453"/>
        <dbReference type="ChEBI" id="CHEBI:58467"/>
        <dbReference type="ChEBI" id="CHEBI:58475"/>
        <dbReference type="ChEBI" id="CHEBI:195366"/>
        <dbReference type="EC" id="2.1.2.3"/>
    </reaction>
</comment>
<comment type="catalytic activity">
    <reaction evidence="1">
        <text>IMP + H2O = 5-formamido-1-(5-phospho-D-ribosyl)imidazole-4-carboxamide</text>
        <dbReference type="Rhea" id="RHEA:18445"/>
        <dbReference type="ChEBI" id="CHEBI:15377"/>
        <dbReference type="ChEBI" id="CHEBI:58053"/>
        <dbReference type="ChEBI" id="CHEBI:58467"/>
        <dbReference type="EC" id="3.5.4.10"/>
    </reaction>
</comment>
<comment type="pathway">
    <text evidence="1">Purine metabolism; IMP biosynthesis via de novo pathway; 5-formamido-1-(5-phospho-D-ribosyl)imidazole-4-carboxamide from 5-amino-1-(5-phospho-D-ribosyl)imidazole-4-carboxamide (10-formyl THF route): step 1/1.</text>
</comment>
<comment type="pathway">
    <text evidence="1">Purine metabolism; IMP biosynthesis via de novo pathway; IMP from 5-formamido-1-(5-phospho-D-ribosyl)imidazole-4-carboxamide: step 1/1.</text>
</comment>
<comment type="domain">
    <text evidence="1">The IMP cyclohydrolase activity resides in the N-terminal region.</text>
</comment>
<comment type="similarity">
    <text evidence="1">Belongs to the PurH family.</text>
</comment>
<gene>
    <name evidence="1" type="primary">purH</name>
    <name type="ordered locus">Cpar_1716</name>
</gene>
<protein>
    <recommendedName>
        <fullName evidence="1">Bifunctional purine biosynthesis protein PurH</fullName>
    </recommendedName>
    <domain>
        <recommendedName>
            <fullName evidence="1">Phosphoribosylaminoimidazolecarboxamide formyltransferase</fullName>
            <ecNumber evidence="1">2.1.2.3</ecNumber>
        </recommendedName>
        <alternativeName>
            <fullName evidence="1">AICAR transformylase</fullName>
        </alternativeName>
    </domain>
    <domain>
        <recommendedName>
            <fullName evidence="1">IMP cyclohydrolase</fullName>
            <ecNumber evidence="1">3.5.4.10</ecNumber>
        </recommendedName>
        <alternativeName>
            <fullName evidence="1">ATIC</fullName>
        </alternativeName>
        <alternativeName>
            <fullName evidence="1">IMP synthase</fullName>
        </alternativeName>
        <alternativeName>
            <fullName evidence="1">Inosinicase</fullName>
        </alternativeName>
    </domain>
</protein>
<reference key="1">
    <citation type="submission" date="2008-06" db="EMBL/GenBank/DDBJ databases">
        <title>Complete sequence of Chlorobaculum parvum NCIB 8327.</title>
        <authorList>
            <consortium name="US DOE Joint Genome Institute"/>
            <person name="Lucas S."/>
            <person name="Copeland A."/>
            <person name="Lapidus A."/>
            <person name="Glavina del Rio T."/>
            <person name="Dalin E."/>
            <person name="Tice H."/>
            <person name="Bruce D."/>
            <person name="Goodwin L."/>
            <person name="Pitluck S."/>
            <person name="Schmutz J."/>
            <person name="Larimer F."/>
            <person name="Land M."/>
            <person name="Hauser L."/>
            <person name="Kyrpides N."/>
            <person name="Mikhailova N."/>
            <person name="Zhao F."/>
            <person name="Li T."/>
            <person name="Liu Z."/>
            <person name="Overmann J."/>
            <person name="Bryant D.A."/>
            <person name="Richardson P."/>
        </authorList>
    </citation>
    <scope>NUCLEOTIDE SEQUENCE [LARGE SCALE GENOMIC DNA]</scope>
    <source>
        <strain>DSM 263 / NCIMB 8327</strain>
    </source>
</reference>
<proteinExistence type="inferred from homology"/>
<feature type="chain" id="PRO_1000096050" description="Bifunctional purine biosynthesis protein PurH">
    <location>
        <begin position="1"/>
        <end position="523"/>
    </location>
</feature>
<feature type="domain" description="MGS-like" evidence="2">
    <location>
        <begin position="1"/>
        <end position="149"/>
    </location>
</feature>
<organism>
    <name type="scientific">Chlorobaculum parvum (strain DSM 263 / NCIMB 8327)</name>
    <name type="common">Chlorobium vibrioforme subsp. thiosulfatophilum</name>
    <dbReference type="NCBI Taxonomy" id="517417"/>
    <lineage>
        <taxon>Bacteria</taxon>
        <taxon>Pseudomonadati</taxon>
        <taxon>Chlorobiota</taxon>
        <taxon>Chlorobiia</taxon>
        <taxon>Chlorobiales</taxon>
        <taxon>Chlorobiaceae</taxon>
        <taxon>Chlorobaculum</taxon>
    </lineage>
</organism>